<evidence type="ECO:0000255" key="1">
    <source>
        <dbReference type="PROSITE-ProRule" id="PRU00805"/>
    </source>
</evidence>
<evidence type="ECO:0000305" key="2"/>
<gene>
    <name type="primary">ACO1</name>
</gene>
<keyword id="KW-0266">Ethylene biosynthesis</keyword>
<keyword id="KW-0292">Fruit ripening</keyword>
<keyword id="KW-0408">Iron</keyword>
<keyword id="KW-0479">Metal-binding</keyword>
<keyword id="KW-0560">Oxidoreductase</keyword>
<keyword id="KW-0847">Vitamin C</keyword>
<dbReference type="EC" id="1.14.17.4"/>
<dbReference type="EMBL" id="AB031027">
    <property type="protein sequence ID" value="BAA90550.1"/>
    <property type="molecule type" value="mRNA"/>
</dbReference>
<dbReference type="RefSeq" id="NP_001280183.1">
    <property type="nucleotide sequence ID" value="NM_001293254.1"/>
</dbReference>
<dbReference type="SMR" id="Q9MB94"/>
<dbReference type="GeneID" id="103329345"/>
<dbReference type="KEGG" id="pmum:103329345"/>
<dbReference type="OrthoDB" id="13720at3745"/>
<dbReference type="UniPathway" id="UPA00384">
    <property type="reaction ID" value="UER00563"/>
</dbReference>
<dbReference type="Proteomes" id="UP000694861">
    <property type="component" value="Linkage group LG4"/>
</dbReference>
<dbReference type="GO" id="GO:0009815">
    <property type="term" value="F:1-aminocyclopropane-1-carboxylate oxidase activity"/>
    <property type="evidence" value="ECO:0007669"/>
    <property type="project" value="UniProtKB-EC"/>
</dbReference>
<dbReference type="GO" id="GO:0031418">
    <property type="term" value="F:L-ascorbic acid binding"/>
    <property type="evidence" value="ECO:0007669"/>
    <property type="project" value="UniProtKB-KW"/>
</dbReference>
<dbReference type="GO" id="GO:0046872">
    <property type="term" value="F:metal ion binding"/>
    <property type="evidence" value="ECO:0007669"/>
    <property type="project" value="UniProtKB-KW"/>
</dbReference>
<dbReference type="GO" id="GO:0009693">
    <property type="term" value="P:ethylene biosynthetic process"/>
    <property type="evidence" value="ECO:0007669"/>
    <property type="project" value="UniProtKB-UniPathway"/>
</dbReference>
<dbReference type="GO" id="GO:0009835">
    <property type="term" value="P:fruit ripening"/>
    <property type="evidence" value="ECO:0007669"/>
    <property type="project" value="UniProtKB-KW"/>
</dbReference>
<dbReference type="FunFam" id="2.60.120.330:FF:000002">
    <property type="entry name" value="1-aminocyclopropane-1-carboxylate oxidase 1"/>
    <property type="match status" value="1"/>
</dbReference>
<dbReference type="Gene3D" id="2.60.120.330">
    <property type="entry name" value="B-lactam Antibiotic, Isopenicillin N Synthase, Chain"/>
    <property type="match status" value="1"/>
</dbReference>
<dbReference type="InterPro" id="IPR026992">
    <property type="entry name" value="DIOX_N"/>
</dbReference>
<dbReference type="InterPro" id="IPR044861">
    <property type="entry name" value="IPNS-like_FE2OG_OXY"/>
</dbReference>
<dbReference type="InterPro" id="IPR027443">
    <property type="entry name" value="IPNS-like_sf"/>
</dbReference>
<dbReference type="InterPro" id="IPR005123">
    <property type="entry name" value="Oxoglu/Fe-dep_dioxygenase_dom"/>
</dbReference>
<dbReference type="InterPro" id="IPR050295">
    <property type="entry name" value="Plant_2OG-oxidoreductases"/>
</dbReference>
<dbReference type="PANTHER" id="PTHR47991">
    <property type="entry name" value="OXOGLUTARATE/IRON-DEPENDENT DIOXYGENASE"/>
    <property type="match status" value="1"/>
</dbReference>
<dbReference type="Pfam" id="PF03171">
    <property type="entry name" value="2OG-FeII_Oxy"/>
    <property type="match status" value="1"/>
</dbReference>
<dbReference type="Pfam" id="PF14226">
    <property type="entry name" value="DIOX_N"/>
    <property type="match status" value="1"/>
</dbReference>
<dbReference type="SUPFAM" id="SSF51197">
    <property type="entry name" value="Clavaminate synthase-like"/>
    <property type="match status" value="1"/>
</dbReference>
<dbReference type="PROSITE" id="PS51471">
    <property type="entry name" value="FE2OG_OXY"/>
    <property type="match status" value="1"/>
</dbReference>
<comment type="catalytic activity">
    <reaction>
        <text>1-aminocyclopropane-1-carboxylate + L-ascorbate + O2 = ethene + L-dehydroascorbate + hydrogen cyanide + CO2 + 2 H2O</text>
        <dbReference type="Rhea" id="RHEA:23640"/>
        <dbReference type="ChEBI" id="CHEBI:15377"/>
        <dbReference type="ChEBI" id="CHEBI:15379"/>
        <dbReference type="ChEBI" id="CHEBI:16526"/>
        <dbReference type="ChEBI" id="CHEBI:18153"/>
        <dbReference type="ChEBI" id="CHEBI:18407"/>
        <dbReference type="ChEBI" id="CHEBI:38290"/>
        <dbReference type="ChEBI" id="CHEBI:58360"/>
        <dbReference type="ChEBI" id="CHEBI:58539"/>
        <dbReference type="EC" id="1.14.17.4"/>
    </reaction>
</comment>
<comment type="cofactor">
    <cofactor>
        <name>Fe cation</name>
        <dbReference type="ChEBI" id="CHEBI:24875"/>
    </cofactor>
</comment>
<comment type="pathway">
    <text>Alkene biosynthesis; ethylene biosynthesis via S-adenosyl-L-methionine; ethylene from S-adenosyl-L-methionine: step 2/2.</text>
</comment>
<comment type="similarity">
    <text evidence="2">Belongs to the iron/ascorbate-dependent oxidoreductase family.</text>
</comment>
<name>ACCO_PRUMU</name>
<protein>
    <recommendedName>
        <fullName>1-aminocyclopropane-1-carboxylate oxidase</fullName>
        <shortName>ACC oxidase</shortName>
        <ecNumber>1.14.17.4</ecNumber>
    </recommendedName>
    <alternativeName>
        <fullName>Ethylene-forming enzyme</fullName>
        <shortName>EFE</shortName>
    </alternativeName>
</protein>
<accession>Q9MB94</accession>
<organism>
    <name type="scientific">Prunus mume</name>
    <name type="common">Japanese apricot</name>
    <name type="synonym">Armeniaca mume</name>
    <dbReference type="NCBI Taxonomy" id="102107"/>
    <lineage>
        <taxon>Eukaryota</taxon>
        <taxon>Viridiplantae</taxon>
        <taxon>Streptophyta</taxon>
        <taxon>Embryophyta</taxon>
        <taxon>Tracheophyta</taxon>
        <taxon>Spermatophyta</taxon>
        <taxon>Magnoliopsida</taxon>
        <taxon>eudicotyledons</taxon>
        <taxon>Gunneridae</taxon>
        <taxon>Pentapetalae</taxon>
        <taxon>rosids</taxon>
        <taxon>fabids</taxon>
        <taxon>Rosales</taxon>
        <taxon>Rosaceae</taxon>
        <taxon>Amygdaloideae</taxon>
        <taxon>Amygdaleae</taxon>
        <taxon>Prunus</taxon>
    </lineage>
</organism>
<sequence>MENFPIINLEGLNGEGRKATMEKIKDACENWGFFELVSHGIPTEFLDTVERLTKEHYRQCLEQRFKELVASKGLEAVKTEVNDMDWESTFYLRHLPKSNISEVPDLEDQYRNVMKEFALKLEKLAEQLLDLLCENLGLEKGYLKKAFYGTNGPTFGTKVSNYPPCPNPELIKGLRAHTDAGGLILLFQDDKVSGLQLLKDGQWIDVPPMRHSIVINLGDQLEVITNGKYRSVEHRVIAQTDGTRMSIASFYNPGSDAVIYPAPTLVEKEAEEKNQVYPKFVFEDYMKLYAGLKFQPKEPRFEAMKAVETNISLVPIATA</sequence>
<proteinExistence type="evidence at transcript level"/>
<feature type="chain" id="PRO_0000067274" description="1-aminocyclopropane-1-carboxylate oxidase">
    <location>
        <begin position="1"/>
        <end position="319"/>
    </location>
</feature>
<feature type="domain" description="Fe2OG dioxygenase" evidence="1">
    <location>
        <begin position="153"/>
        <end position="253"/>
    </location>
</feature>
<feature type="binding site" evidence="1">
    <location>
        <position position="177"/>
    </location>
    <ligand>
        <name>Fe cation</name>
        <dbReference type="ChEBI" id="CHEBI:24875"/>
    </ligand>
</feature>
<feature type="binding site" evidence="1">
    <location>
        <position position="179"/>
    </location>
    <ligand>
        <name>Fe cation</name>
        <dbReference type="ChEBI" id="CHEBI:24875"/>
    </ligand>
</feature>
<feature type="binding site" evidence="1">
    <location>
        <position position="234"/>
    </location>
    <ligand>
        <name>Fe cation</name>
        <dbReference type="ChEBI" id="CHEBI:24875"/>
    </ligand>
</feature>
<reference key="1">
    <citation type="journal article" date="1999" name="Physiol. Plantarum">
        <title>Expression of ACC synthase is enhanced earlier than that of ACC oxidase during fruit ripening of mume (Prunus mume).</title>
        <authorList>
            <person name="Mita S."/>
            <person name="Kirita C."/>
            <person name="Kato M."/>
            <person name="Hyodo H."/>
        </authorList>
    </citation>
    <scope>NUCLEOTIDE SEQUENCE [MRNA]</scope>
</reference>